<keyword id="KW-0004">4Fe-4S</keyword>
<keyword id="KW-0997">Cell inner membrane</keyword>
<keyword id="KW-1003">Cell membrane</keyword>
<keyword id="KW-0408">Iron</keyword>
<keyword id="KW-0411">Iron-sulfur</keyword>
<keyword id="KW-0472">Membrane</keyword>
<keyword id="KW-0479">Metal-binding</keyword>
<keyword id="KW-0520">NAD</keyword>
<keyword id="KW-0521">NADP</keyword>
<keyword id="KW-0618">Plastoquinone</keyword>
<keyword id="KW-0874">Quinone</keyword>
<keyword id="KW-1185">Reference proteome</keyword>
<keyword id="KW-1278">Translocase</keyword>
<keyword id="KW-0813">Transport</keyword>
<organism>
    <name type="scientific">Gloeobacter violaceus (strain ATCC 29082 / PCC 7421)</name>
    <dbReference type="NCBI Taxonomy" id="251221"/>
    <lineage>
        <taxon>Bacteria</taxon>
        <taxon>Bacillati</taxon>
        <taxon>Cyanobacteriota</taxon>
        <taxon>Cyanophyceae</taxon>
        <taxon>Gloeobacterales</taxon>
        <taxon>Gloeobacteraceae</taxon>
        <taxon>Gloeobacter</taxon>
    </lineage>
</organism>
<accession>Q7NML6</accession>
<feature type="chain" id="PRO_0000358408" description="NAD(P)H-quinone oxidoreductase subunit K 1">
    <location>
        <begin position="1"/>
        <end position="232"/>
    </location>
</feature>
<feature type="binding site" evidence="1">
    <location>
        <position position="49"/>
    </location>
    <ligand>
        <name>[4Fe-4S] cluster</name>
        <dbReference type="ChEBI" id="CHEBI:49883"/>
    </ligand>
</feature>
<feature type="binding site" evidence="1">
    <location>
        <position position="50"/>
    </location>
    <ligand>
        <name>[4Fe-4S] cluster</name>
        <dbReference type="ChEBI" id="CHEBI:49883"/>
    </ligand>
</feature>
<feature type="binding site" evidence="1">
    <location>
        <position position="114"/>
    </location>
    <ligand>
        <name>[4Fe-4S] cluster</name>
        <dbReference type="ChEBI" id="CHEBI:49883"/>
    </ligand>
</feature>
<feature type="binding site" evidence="1">
    <location>
        <position position="145"/>
    </location>
    <ligand>
        <name>[4Fe-4S] cluster</name>
        <dbReference type="ChEBI" id="CHEBI:49883"/>
    </ligand>
</feature>
<gene>
    <name evidence="1" type="primary">ndhK1</name>
    <name type="ordered locus">glr0749</name>
</gene>
<sequence>MDIKNLLNPIERPEVTSELTNNVVLTTLNDLYNWARLSSVWPLMYGTSCCFIEFAGLIGSRFDFDRFGLVPRASPRQADLIITAGTVTMKMAPALVTLYEQMPEPKYVIAMGACTITGGMFSTDSYTTVRGVDKLIPVDVYIPGCPPRPEAIFDAIVKLRKKMATEDVRDRYEQIRQTHRYHTTAHTLKAVPESLSSKYLESPTRQAPPPGLAAAMEMPLVLPEVVKQNEQV</sequence>
<comment type="function">
    <text evidence="1">NDH-1 shuttles electrons from an unknown electron donor, via FMN and iron-sulfur (Fe-S) centers, to quinones in the respiratory and/or the photosynthetic chain. The immediate electron acceptor for the enzyme in this species is believed to be plastoquinone. Couples the redox reaction to proton translocation, and thus conserves the redox energy in a proton gradient. Cyanobacterial NDH-1 also plays a role in inorganic carbon-concentration.</text>
</comment>
<comment type="catalytic activity">
    <reaction evidence="1">
        <text>a plastoquinone + NADH + (n+1) H(+)(in) = a plastoquinol + NAD(+) + n H(+)(out)</text>
        <dbReference type="Rhea" id="RHEA:42608"/>
        <dbReference type="Rhea" id="RHEA-COMP:9561"/>
        <dbReference type="Rhea" id="RHEA-COMP:9562"/>
        <dbReference type="ChEBI" id="CHEBI:15378"/>
        <dbReference type="ChEBI" id="CHEBI:17757"/>
        <dbReference type="ChEBI" id="CHEBI:57540"/>
        <dbReference type="ChEBI" id="CHEBI:57945"/>
        <dbReference type="ChEBI" id="CHEBI:62192"/>
    </reaction>
</comment>
<comment type="catalytic activity">
    <reaction evidence="1">
        <text>a plastoquinone + NADPH + (n+1) H(+)(in) = a plastoquinol + NADP(+) + n H(+)(out)</text>
        <dbReference type="Rhea" id="RHEA:42612"/>
        <dbReference type="Rhea" id="RHEA-COMP:9561"/>
        <dbReference type="Rhea" id="RHEA-COMP:9562"/>
        <dbReference type="ChEBI" id="CHEBI:15378"/>
        <dbReference type="ChEBI" id="CHEBI:17757"/>
        <dbReference type="ChEBI" id="CHEBI:57783"/>
        <dbReference type="ChEBI" id="CHEBI:58349"/>
        <dbReference type="ChEBI" id="CHEBI:62192"/>
    </reaction>
</comment>
<comment type="cofactor">
    <cofactor evidence="1">
        <name>[4Fe-4S] cluster</name>
        <dbReference type="ChEBI" id="CHEBI:49883"/>
    </cofactor>
    <text evidence="1">Binds 1 [4Fe-4S] cluster.</text>
</comment>
<comment type="subunit">
    <text evidence="1">NDH-1 can be composed of about 15 different subunits; different subcomplexes with different compositions have been identified which probably have different functions.</text>
</comment>
<comment type="subcellular location">
    <subcellularLocation>
        <location evidence="1">Cell inner membrane</location>
        <topology evidence="1">Peripheral membrane protein</topology>
        <orientation evidence="1">Cytoplasmic side</orientation>
    </subcellularLocation>
</comment>
<comment type="similarity">
    <text evidence="1">Belongs to the complex I 20 kDa subunit family.</text>
</comment>
<name>NDHK1_GLOVI</name>
<evidence type="ECO:0000255" key="1">
    <source>
        <dbReference type="HAMAP-Rule" id="MF_01356"/>
    </source>
</evidence>
<reference key="1">
    <citation type="journal article" date="2003" name="DNA Res.">
        <title>Complete genome structure of Gloeobacter violaceus PCC 7421, a cyanobacterium that lacks thylakoids.</title>
        <authorList>
            <person name="Nakamura Y."/>
            <person name="Kaneko T."/>
            <person name="Sato S."/>
            <person name="Mimuro M."/>
            <person name="Miyashita H."/>
            <person name="Tsuchiya T."/>
            <person name="Sasamoto S."/>
            <person name="Watanabe A."/>
            <person name="Kawashima K."/>
            <person name="Kishida Y."/>
            <person name="Kiyokawa C."/>
            <person name="Kohara M."/>
            <person name="Matsumoto M."/>
            <person name="Matsuno A."/>
            <person name="Nakazaki N."/>
            <person name="Shimpo S."/>
            <person name="Takeuchi C."/>
            <person name="Yamada M."/>
            <person name="Tabata S."/>
        </authorList>
    </citation>
    <scope>NUCLEOTIDE SEQUENCE [LARGE SCALE GENOMIC DNA]</scope>
    <source>
        <strain>ATCC 29082 / PCC 7421</strain>
    </source>
</reference>
<dbReference type="EC" id="7.1.1.-" evidence="1"/>
<dbReference type="EMBL" id="BA000045">
    <property type="protein sequence ID" value="BAC88690.1"/>
    <property type="molecule type" value="Genomic_DNA"/>
</dbReference>
<dbReference type="RefSeq" id="NP_923695.1">
    <property type="nucleotide sequence ID" value="NC_005125.1"/>
</dbReference>
<dbReference type="RefSeq" id="WP_011140751.1">
    <property type="nucleotide sequence ID" value="NC_005125.1"/>
</dbReference>
<dbReference type="SMR" id="Q7NML6"/>
<dbReference type="FunCoup" id="Q7NML6">
    <property type="interactions" value="313"/>
</dbReference>
<dbReference type="STRING" id="251221.gene:10758226"/>
<dbReference type="EnsemblBacteria" id="BAC88690">
    <property type="protein sequence ID" value="BAC88690"/>
    <property type="gene ID" value="BAC88690"/>
</dbReference>
<dbReference type="KEGG" id="gvi:glr0749"/>
<dbReference type="PATRIC" id="fig|251221.4.peg.762"/>
<dbReference type="eggNOG" id="COG0377">
    <property type="taxonomic scope" value="Bacteria"/>
</dbReference>
<dbReference type="HOGENOM" id="CLU_055737_2_0_3"/>
<dbReference type="InParanoid" id="Q7NML6"/>
<dbReference type="OrthoDB" id="9786737at2"/>
<dbReference type="PhylomeDB" id="Q7NML6"/>
<dbReference type="Proteomes" id="UP000000557">
    <property type="component" value="Chromosome"/>
</dbReference>
<dbReference type="GO" id="GO:0005886">
    <property type="term" value="C:plasma membrane"/>
    <property type="evidence" value="ECO:0007669"/>
    <property type="project" value="UniProtKB-SubCell"/>
</dbReference>
<dbReference type="GO" id="GO:0045271">
    <property type="term" value="C:respiratory chain complex I"/>
    <property type="evidence" value="ECO:0000318"/>
    <property type="project" value="GO_Central"/>
</dbReference>
<dbReference type="GO" id="GO:0051539">
    <property type="term" value="F:4 iron, 4 sulfur cluster binding"/>
    <property type="evidence" value="ECO:0007669"/>
    <property type="project" value="UniProtKB-KW"/>
</dbReference>
<dbReference type="GO" id="GO:0005506">
    <property type="term" value="F:iron ion binding"/>
    <property type="evidence" value="ECO:0007669"/>
    <property type="project" value="UniProtKB-UniRule"/>
</dbReference>
<dbReference type="GO" id="GO:0008137">
    <property type="term" value="F:NADH dehydrogenase (ubiquinone) activity"/>
    <property type="evidence" value="ECO:0000318"/>
    <property type="project" value="GO_Central"/>
</dbReference>
<dbReference type="GO" id="GO:0048038">
    <property type="term" value="F:quinone binding"/>
    <property type="evidence" value="ECO:0007669"/>
    <property type="project" value="UniProtKB-KW"/>
</dbReference>
<dbReference type="GO" id="GO:0009060">
    <property type="term" value="P:aerobic respiration"/>
    <property type="evidence" value="ECO:0000318"/>
    <property type="project" value="GO_Central"/>
</dbReference>
<dbReference type="GO" id="GO:0015990">
    <property type="term" value="P:electron transport coupled proton transport"/>
    <property type="evidence" value="ECO:0000318"/>
    <property type="project" value="GO_Central"/>
</dbReference>
<dbReference type="GO" id="GO:0019684">
    <property type="term" value="P:photosynthesis, light reaction"/>
    <property type="evidence" value="ECO:0007669"/>
    <property type="project" value="UniProtKB-UniRule"/>
</dbReference>
<dbReference type="FunFam" id="3.40.50.12280:FF:000003">
    <property type="entry name" value="NAD(P)H-quinone oxidoreductase subunit K, chloroplastic"/>
    <property type="match status" value="1"/>
</dbReference>
<dbReference type="Gene3D" id="3.40.50.12280">
    <property type="match status" value="1"/>
</dbReference>
<dbReference type="HAMAP" id="MF_01356">
    <property type="entry name" value="NDH1_NuoB"/>
    <property type="match status" value="1"/>
</dbReference>
<dbReference type="InterPro" id="IPR006137">
    <property type="entry name" value="NADH_UbQ_OxRdtase-like_20kDa"/>
</dbReference>
<dbReference type="InterPro" id="IPR006138">
    <property type="entry name" value="NADH_UQ_OxRdtase_20Kd_su"/>
</dbReference>
<dbReference type="NCBIfam" id="TIGR01957">
    <property type="entry name" value="nuoB_fam"/>
    <property type="match status" value="1"/>
</dbReference>
<dbReference type="NCBIfam" id="NF005012">
    <property type="entry name" value="PRK06411.1"/>
    <property type="match status" value="1"/>
</dbReference>
<dbReference type="PANTHER" id="PTHR11995">
    <property type="entry name" value="NADH DEHYDROGENASE"/>
    <property type="match status" value="1"/>
</dbReference>
<dbReference type="PANTHER" id="PTHR11995:SF14">
    <property type="entry name" value="NADH DEHYDROGENASE [UBIQUINONE] IRON-SULFUR PROTEIN 7, MITOCHONDRIAL"/>
    <property type="match status" value="1"/>
</dbReference>
<dbReference type="Pfam" id="PF01058">
    <property type="entry name" value="Oxidored_q6"/>
    <property type="match status" value="1"/>
</dbReference>
<dbReference type="SUPFAM" id="SSF56770">
    <property type="entry name" value="HydA/Nqo6-like"/>
    <property type="match status" value="1"/>
</dbReference>
<dbReference type="PROSITE" id="PS01150">
    <property type="entry name" value="COMPLEX1_20K"/>
    <property type="match status" value="1"/>
</dbReference>
<protein>
    <recommendedName>
        <fullName evidence="1">NAD(P)H-quinone oxidoreductase subunit K 1</fullName>
        <ecNumber evidence="1">7.1.1.-</ecNumber>
    </recommendedName>
    <alternativeName>
        <fullName evidence="1">NAD(P)H dehydrogenase I subunit K 1</fullName>
    </alternativeName>
    <alternativeName>
        <fullName evidence="1">NDH-1 subunit K 1</fullName>
        <shortName evidence="1">NDH-K 1</shortName>
    </alternativeName>
</protein>
<proteinExistence type="inferred from homology"/>